<gene>
    <name evidence="1" type="primary">gcvPB</name>
    <name type="ordered locus">lwe1365</name>
</gene>
<reference key="1">
    <citation type="journal article" date="2006" name="J. Bacteriol.">
        <title>Whole-genome sequence of Listeria welshimeri reveals common steps in genome reduction with Listeria innocua as compared to Listeria monocytogenes.</title>
        <authorList>
            <person name="Hain T."/>
            <person name="Steinweg C."/>
            <person name="Kuenne C.T."/>
            <person name="Billion A."/>
            <person name="Ghai R."/>
            <person name="Chatterjee S.S."/>
            <person name="Domann E."/>
            <person name="Kaerst U."/>
            <person name="Goesmann A."/>
            <person name="Bekel T."/>
            <person name="Bartels D."/>
            <person name="Kaiser O."/>
            <person name="Meyer F."/>
            <person name="Puehler A."/>
            <person name="Weisshaar B."/>
            <person name="Wehland J."/>
            <person name="Liang C."/>
            <person name="Dandekar T."/>
            <person name="Lampidis R."/>
            <person name="Kreft J."/>
            <person name="Goebel W."/>
            <person name="Chakraborty T."/>
        </authorList>
    </citation>
    <scope>NUCLEOTIDE SEQUENCE [LARGE SCALE GENOMIC DNA]</scope>
    <source>
        <strain>ATCC 35897 / DSM 20650 / CCUG 15529 / CIP 8149 / NCTC 11857 / SLCC 5334 / V8</strain>
    </source>
</reference>
<evidence type="ECO:0000255" key="1">
    <source>
        <dbReference type="HAMAP-Rule" id="MF_00713"/>
    </source>
</evidence>
<comment type="function">
    <text evidence="1">The glycine cleavage system catalyzes the degradation of glycine. The P protein binds the alpha-amino group of glycine through its pyridoxal phosphate cofactor; CO(2) is released and the remaining methylamine moiety is then transferred to the lipoamide cofactor of the H protein.</text>
</comment>
<comment type="catalytic activity">
    <reaction evidence="1">
        <text>N(6)-[(R)-lipoyl]-L-lysyl-[glycine-cleavage complex H protein] + glycine + H(+) = N(6)-[(R)-S(8)-aminomethyldihydrolipoyl]-L-lysyl-[glycine-cleavage complex H protein] + CO2</text>
        <dbReference type="Rhea" id="RHEA:24304"/>
        <dbReference type="Rhea" id="RHEA-COMP:10494"/>
        <dbReference type="Rhea" id="RHEA-COMP:10495"/>
        <dbReference type="ChEBI" id="CHEBI:15378"/>
        <dbReference type="ChEBI" id="CHEBI:16526"/>
        <dbReference type="ChEBI" id="CHEBI:57305"/>
        <dbReference type="ChEBI" id="CHEBI:83099"/>
        <dbReference type="ChEBI" id="CHEBI:83143"/>
        <dbReference type="EC" id="1.4.4.2"/>
    </reaction>
</comment>
<comment type="cofactor">
    <cofactor evidence="1">
        <name>pyridoxal 5'-phosphate</name>
        <dbReference type="ChEBI" id="CHEBI:597326"/>
    </cofactor>
</comment>
<comment type="subunit">
    <text evidence="1">The glycine cleavage system is composed of four proteins: P, T, L and H. In this organism, the P 'protein' is a heterodimer of two subunits.</text>
</comment>
<comment type="similarity">
    <text evidence="1">Belongs to the GcvP family. C-terminal subunit subfamily.</text>
</comment>
<feature type="chain" id="PRO_1000045697" description="Probable glycine dehydrogenase (decarboxylating) subunit 2">
    <location>
        <begin position="1"/>
        <end position="488"/>
    </location>
</feature>
<feature type="modified residue" description="N6-(pyridoxal phosphate)lysine" evidence="1">
    <location>
        <position position="274"/>
    </location>
</feature>
<dbReference type="EC" id="1.4.4.2" evidence="1"/>
<dbReference type="EMBL" id="AM263198">
    <property type="protein sequence ID" value="CAK20783.1"/>
    <property type="molecule type" value="Genomic_DNA"/>
</dbReference>
<dbReference type="RefSeq" id="WP_011702165.1">
    <property type="nucleotide sequence ID" value="NC_008555.1"/>
</dbReference>
<dbReference type="SMR" id="A0AIF1"/>
<dbReference type="STRING" id="386043.lwe1365"/>
<dbReference type="GeneID" id="61189241"/>
<dbReference type="KEGG" id="lwe:lwe1365"/>
<dbReference type="eggNOG" id="COG1003">
    <property type="taxonomic scope" value="Bacteria"/>
</dbReference>
<dbReference type="HOGENOM" id="CLU_004620_5_0_9"/>
<dbReference type="OrthoDB" id="9801272at2"/>
<dbReference type="Proteomes" id="UP000000779">
    <property type="component" value="Chromosome"/>
</dbReference>
<dbReference type="GO" id="GO:0005829">
    <property type="term" value="C:cytosol"/>
    <property type="evidence" value="ECO:0007669"/>
    <property type="project" value="TreeGrafter"/>
</dbReference>
<dbReference type="GO" id="GO:0005960">
    <property type="term" value="C:glycine cleavage complex"/>
    <property type="evidence" value="ECO:0007669"/>
    <property type="project" value="TreeGrafter"/>
</dbReference>
<dbReference type="GO" id="GO:0016594">
    <property type="term" value="F:glycine binding"/>
    <property type="evidence" value="ECO:0007669"/>
    <property type="project" value="TreeGrafter"/>
</dbReference>
<dbReference type="GO" id="GO:0004375">
    <property type="term" value="F:glycine dehydrogenase (decarboxylating) activity"/>
    <property type="evidence" value="ECO:0007669"/>
    <property type="project" value="UniProtKB-EC"/>
</dbReference>
<dbReference type="GO" id="GO:0030170">
    <property type="term" value="F:pyridoxal phosphate binding"/>
    <property type="evidence" value="ECO:0007669"/>
    <property type="project" value="TreeGrafter"/>
</dbReference>
<dbReference type="GO" id="GO:0019464">
    <property type="term" value="P:glycine decarboxylation via glycine cleavage system"/>
    <property type="evidence" value="ECO:0007669"/>
    <property type="project" value="UniProtKB-UniRule"/>
</dbReference>
<dbReference type="CDD" id="cd00613">
    <property type="entry name" value="GDC-P"/>
    <property type="match status" value="1"/>
</dbReference>
<dbReference type="FunFam" id="3.40.640.10:FF:000034">
    <property type="entry name" value="Probable glycine dehydrogenase (decarboxylating) subunit 2"/>
    <property type="match status" value="1"/>
</dbReference>
<dbReference type="FunFam" id="3.90.1150.10:FF:000014">
    <property type="entry name" value="Probable glycine dehydrogenase (decarboxylating) subunit 2"/>
    <property type="match status" value="1"/>
</dbReference>
<dbReference type="Gene3D" id="6.20.440.10">
    <property type="match status" value="1"/>
</dbReference>
<dbReference type="Gene3D" id="3.90.1150.10">
    <property type="entry name" value="Aspartate Aminotransferase, domain 1"/>
    <property type="match status" value="1"/>
</dbReference>
<dbReference type="Gene3D" id="3.40.640.10">
    <property type="entry name" value="Type I PLP-dependent aspartate aminotransferase-like (Major domain)"/>
    <property type="match status" value="1"/>
</dbReference>
<dbReference type="HAMAP" id="MF_00713">
    <property type="entry name" value="GcvPB"/>
    <property type="match status" value="1"/>
</dbReference>
<dbReference type="InterPro" id="IPR023012">
    <property type="entry name" value="GcvPB"/>
</dbReference>
<dbReference type="InterPro" id="IPR049316">
    <property type="entry name" value="GDC-P_C"/>
</dbReference>
<dbReference type="InterPro" id="IPR049315">
    <property type="entry name" value="GDC-P_N"/>
</dbReference>
<dbReference type="InterPro" id="IPR020581">
    <property type="entry name" value="GDC_P"/>
</dbReference>
<dbReference type="InterPro" id="IPR015424">
    <property type="entry name" value="PyrdxlP-dep_Trfase"/>
</dbReference>
<dbReference type="InterPro" id="IPR015421">
    <property type="entry name" value="PyrdxlP-dep_Trfase_major"/>
</dbReference>
<dbReference type="InterPro" id="IPR015422">
    <property type="entry name" value="PyrdxlP-dep_Trfase_small"/>
</dbReference>
<dbReference type="NCBIfam" id="NF003346">
    <property type="entry name" value="PRK04366.1"/>
    <property type="match status" value="1"/>
</dbReference>
<dbReference type="PANTHER" id="PTHR11773:SF1">
    <property type="entry name" value="GLYCINE DEHYDROGENASE (DECARBOXYLATING), MITOCHONDRIAL"/>
    <property type="match status" value="1"/>
</dbReference>
<dbReference type="PANTHER" id="PTHR11773">
    <property type="entry name" value="GLYCINE DEHYDROGENASE, DECARBOXYLATING"/>
    <property type="match status" value="1"/>
</dbReference>
<dbReference type="Pfam" id="PF21478">
    <property type="entry name" value="GcvP2_C"/>
    <property type="match status" value="1"/>
</dbReference>
<dbReference type="Pfam" id="PF02347">
    <property type="entry name" value="GDC-P"/>
    <property type="match status" value="1"/>
</dbReference>
<dbReference type="SUPFAM" id="SSF53383">
    <property type="entry name" value="PLP-dependent transferases"/>
    <property type="match status" value="1"/>
</dbReference>
<proteinExistence type="inferred from homology"/>
<keyword id="KW-0560">Oxidoreductase</keyword>
<keyword id="KW-0663">Pyridoxal phosphate</keyword>
<protein>
    <recommendedName>
        <fullName evidence="1">Probable glycine dehydrogenase (decarboxylating) subunit 2</fullName>
        <ecNumber evidence="1">1.4.4.2</ecNumber>
    </recommendedName>
    <alternativeName>
        <fullName evidence="1">Glycine cleavage system P-protein subunit 2</fullName>
    </alternativeName>
    <alternativeName>
        <fullName evidence="1">Glycine decarboxylase subunit 2</fullName>
    </alternativeName>
    <alternativeName>
        <fullName evidence="1">Glycine dehydrogenase (aminomethyl-transferring) subunit 2</fullName>
    </alternativeName>
</protein>
<accession>A0AIF1</accession>
<name>GCSPB_LISW6</name>
<sequence>MNLEETMPLVFERSIPGRIGFSLPESDVPETKASDFFEEAYLRSTPADLPELSELEIMRHYTNLSNHNFGVDSGFYPLGSCTMKYNPKINEKVARFPGFANIHPNQPESSVQGALELLYDLQTSLVEITGMDEVTLQPAAGAHGEWTGLMLIRAFHEKNGDTKRTKVIIPDSAHGTNPASAAVAGFDVVTVKSNEKGLVDVADLKKVVGEDTAALMLTNPNTLGLFEKDIVEMAEIVHAAGGKLYYDGANLNAIMAKVRPGDMGFDVVHLNLHKTFTGPHGGGGPGSGPIGVKKELIPFLPTPVLTKKEDAYTFDYNYPDSIGRVKPYYGNFGINVRAYTYIRTMGPDGLKLVTEYAVLNANYMMRKLQAAYDLPFDQVCKHEFVLSGNRQKKLGVRTIDIAKRLLDHNFHPPTVYFPLIVGEAIMIEPTETESKETLDSFIDTMLKIAKEAEENPEIVQEAPHSTYVKRLDETRAARKPVLRYQKEV</sequence>
<organism>
    <name type="scientific">Listeria welshimeri serovar 6b (strain ATCC 35897 / DSM 20650 / CCUG 15529 / CIP 8149 / NCTC 11857 / SLCC 5334 / V8)</name>
    <dbReference type="NCBI Taxonomy" id="386043"/>
    <lineage>
        <taxon>Bacteria</taxon>
        <taxon>Bacillati</taxon>
        <taxon>Bacillota</taxon>
        <taxon>Bacilli</taxon>
        <taxon>Bacillales</taxon>
        <taxon>Listeriaceae</taxon>
        <taxon>Listeria</taxon>
    </lineage>
</organism>